<protein>
    <recommendedName>
        <fullName evidence="1">Glutamate--tRNA ligase</fullName>
        <ecNumber evidence="1">6.1.1.17</ecNumber>
    </recommendedName>
    <alternativeName>
        <fullName evidence="1">Glutamyl-tRNA synthetase</fullName>
        <shortName evidence="1">GluRS</shortName>
    </alternativeName>
</protein>
<proteinExistence type="evidence at protein level"/>
<reference key="1">
    <citation type="journal article" date="1992" name="Eur. J. Biochem.">
        <title>Glutamyl-tRNA synthetase from Thermus thermophilus HB8. Molecular cloning of the gltX gene and crystallization of the overproduced protein.</title>
        <authorList>
            <person name="Nureki O."/>
            <person name="Suzuki K."/>
            <person name="Hara-Yokoyama M."/>
            <person name="Kohno T."/>
            <person name="Matsuzawa H."/>
            <person name="Ohta T."/>
            <person name="Shimizu T."/>
            <person name="Morikawa K."/>
            <person name="Miyazawa T."/>
            <person name="Yokoyama S."/>
        </authorList>
    </citation>
    <scope>NUCLEOTIDE SEQUENCE [GENOMIC DNA]</scope>
</reference>
<reference key="2">
    <citation type="submission" date="2004-11" db="EMBL/GenBank/DDBJ databases">
        <title>Complete genome sequence of Thermus thermophilus HB8.</title>
        <authorList>
            <person name="Masui R."/>
            <person name="Kurokawa K."/>
            <person name="Nakagawa N."/>
            <person name="Tokunaga F."/>
            <person name="Koyama Y."/>
            <person name="Shibata T."/>
            <person name="Oshima T."/>
            <person name="Yokoyama S."/>
            <person name="Yasunaga T."/>
            <person name="Kuramitsu S."/>
        </authorList>
    </citation>
    <scope>NUCLEOTIDE SEQUENCE [LARGE SCALE GENOMIC DNA]</scope>
    <source>
        <strain>ATCC 27634 / DSM 579 / HB8</strain>
    </source>
</reference>
<reference key="3">
    <citation type="journal article" date="1995" name="Science">
        <title>Architectures of class-defining and specific domains of glutamyl-tRNA synthetase.</title>
        <authorList>
            <person name="Nureki O."/>
            <person name="Vassylyev D.G."/>
            <person name="Katayanagi K."/>
            <person name="Shimizu T."/>
            <person name="Sekine S."/>
            <person name="Kigawa T."/>
            <person name="Miyazawa T."/>
            <person name="Yokoyama S."/>
            <person name="Morikawa K."/>
        </authorList>
    </citation>
    <scope>X-RAY CRYSTALLOGRAPHY (2.5 ANGSTROMS)</scope>
</reference>
<reference key="4">
    <citation type="journal article" date="2001" name="Nat. Struct. Biol.">
        <title>Structural basis for anticodon recognition by discriminating glutamyl-tRNA synthetase.</title>
        <authorList>
            <person name="Sekine S."/>
            <person name="Nureki O."/>
            <person name="Shimada A."/>
            <person name="Vassylyev D.G."/>
            <person name="Yokoyama S."/>
        </authorList>
    </citation>
    <scope>X-RAY CRYSTALLOGRAPHY (2.4 ANGSTROMS) IN COMPLEX WITH TRNA-GLU</scope>
    <scope>FUNCTION</scope>
    <scope>BIOPHYSICOCHEMICAL PROPERTIES</scope>
    <scope>MUTAGENESIS OF ARG-358</scope>
</reference>
<reference key="5">
    <citation type="journal article" date="2003" name="EMBO J.">
        <title>ATP binding by glutamyl-tRNA synthetase is switched to the productive mode by tRNA binding.</title>
        <authorList>
            <person name="Sekine S."/>
            <person name="Nureki O."/>
            <person name="Dubois D.Y."/>
            <person name="Bernier S."/>
            <person name="Chenevert R."/>
            <person name="Lapointe J."/>
            <person name="Vassylyev D.G."/>
            <person name="Yokoyama S."/>
        </authorList>
    </citation>
    <scope>X-RAY CRYSTALLOGRAPHY (1.8 ANGSTROMS) IN COMPLEXES WITH ATP; GLUTAMATE AND TRNA</scope>
</reference>
<reference key="6">
    <citation type="journal article" date="2006" name="Structure">
        <title>Structural bases of transfer RNA-dependent amino acid recognition and activation by glutamyl-tRNA synthetase.</title>
        <authorList>
            <person name="Sekine S."/>
            <person name="Shichiri M."/>
            <person name="Bernier S."/>
            <person name="Chenevert R."/>
            <person name="Lapointe J."/>
            <person name="Yokoyama S."/>
        </authorList>
    </citation>
    <scope>X-RAY CRYSTALLOGRAPHY (2.2 ANGSTROMS) IN COMPLEXES WITH ATP; GLUTAMATE AND TRNA</scope>
    <scope>FUNCTION</scope>
    <scope>ACTIVITY REGULATION</scope>
</reference>
<gene>
    <name evidence="1" type="primary">gltX</name>
    <name type="ordered locus">TTHA0438</name>
</gene>
<accession>P27000</accession>
<accession>Q5SL55</accession>
<keyword id="KW-0002">3D-structure</keyword>
<keyword id="KW-0030">Aminoacyl-tRNA synthetase</keyword>
<keyword id="KW-0067">ATP-binding</keyword>
<keyword id="KW-0963">Cytoplasm</keyword>
<keyword id="KW-0436">Ligase</keyword>
<keyword id="KW-0547">Nucleotide-binding</keyword>
<keyword id="KW-0648">Protein biosynthesis</keyword>
<keyword id="KW-1185">Reference proteome</keyword>
<dbReference type="EC" id="6.1.1.17" evidence="1"/>
<dbReference type="EMBL" id="X64557">
    <property type="protein sequence ID" value="CAA45854.1"/>
    <property type="molecule type" value="Genomic_DNA"/>
</dbReference>
<dbReference type="EMBL" id="AP008226">
    <property type="protein sequence ID" value="BAD70261.1"/>
    <property type="molecule type" value="Genomic_DNA"/>
</dbReference>
<dbReference type="RefSeq" id="WP_011227935.1">
    <property type="nucleotide sequence ID" value="NC_006461.1"/>
</dbReference>
<dbReference type="RefSeq" id="YP_143704.1">
    <property type="nucleotide sequence ID" value="NC_006461.1"/>
</dbReference>
<dbReference type="PDB" id="1G59">
    <property type="method" value="X-ray"/>
    <property type="resolution" value="2.40 A"/>
    <property type="chains" value="A/C=1-468"/>
</dbReference>
<dbReference type="PDB" id="1GLN">
    <property type="method" value="X-ray"/>
    <property type="resolution" value="2.50 A"/>
    <property type="chains" value="A=1-468"/>
</dbReference>
<dbReference type="PDB" id="1J09">
    <property type="method" value="X-ray"/>
    <property type="resolution" value="1.80 A"/>
    <property type="chains" value="A=1-468"/>
</dbReference>
<dbReference type="PDB" id="1N75">
    <property type="method" value="X-ray"/>
    <property type="resolution" value="1.90 A"/>
    <property type="chains" value="A=1-468"/>
</dbReference>
<dbReference type="PDB" id="1N77">
    <property type="method" value="X-ray"/>
    <property type="resolution" value="2.40 A"/>
    <property type="chains" value="A/B=1-468"/>
</dbReference>
<dbReference type="PDB" id="1N78">
    <property type="method" value="X-ray"/>
    <property type="resolution" value="2.10 A"/>
    <property type="chains" value="A/B=1-468"/>
</dbReference>
<dbReference type="PDB" id="2CUZ">
    <property type="method" value="X-ray"/>
    <property type="resolution" value="1.98 A"/>
    <property type="chains" value="A=1-468"/>
</dbReference>
<dbReference type="PDB" id="2CV0">
    <property type="method" value="X-ray"/>
    <property type="resolution" value="2.40 A"/>
    <property type="chains" value="A/B=1-468"/>
</dbReference>
<dbReference type="PDB" id="2CV1">
    <property type="method" value="X-ray"/>
    <property type="resolution" value="2.41 A"/>
    <property type="chains" value="A/B=1-468"/>
</dbReference>
<dbReference type="PDB" id="2CV2">
    <property type="method" value="X-ray"/>
    <property type="resolution" value="2.69 A"/>
    <property type="chains" value="A/B=1-468"/>
</dbReference>
<dbReference type="PDB" id="2DXI">
    <property type="method" value="X-ray"/>
    <property type="resolution" value="2.20 A"/>
    <property type="chains" value="A/B=1-468"/>
</dbReference>
<dbReference type="PDBsum" id="1G59"/>
<dbReference type="PDBsum" id="1GLN"/>
<dbReference type="PDBsum" id="1J09"/>
<dbReference type="PDBsum" id="1N75"/>
<dbReference type="PDBsum" id="1N77"/>
<dbReference type="PDBsum" id="1N78"/>
<dbReference type="PDBsum" id="2CUZ"/>
<dbReference type="PDBsum" id="2CV0"/>
<dbReference type="PDBsum" id="2CV1"/>
<dbReference type="PDBsum" id="2CV2"/>
<dbReference type="PDBsum" id="2DXI"/>
<dbReference type="SMR" id="P27000"/>
<dbReference type="DIP" id="DIP-29168N"/>
<dbReference type="EnsemblBacteria" id="BAD70261">
    <property type="protein sequence ID" value="BAD70261"/>
    <property type="gene ID" value="BAD70261"/>
</dbReference>
<dbReference type="GeneID" id="3168748"/>
<dbReference type="KEGG" id="ttj:TTHA0438"/>
<dbReference type="PATRIC" id="fig|300852.9.peg.438"/>
<dbReference type="eggNOG" id="COG0008">
    <property type="taxonomic scope" value="Bacteria"/>
</dbReference>
<dbReference type="HOGENOM" id="CLU_015768_6_3_0"/>
<dbReference type="PhylomeDB" id="P27000"/>
<dbReference type="BRENDA" id="6.1.1.17">
    <property type="organism ID" value="2305"/>
</dbReference>
<dbReference type="SABIO-RK" id="P27000"/>
<dbReference type="EvolutionaryTrace" id="P27000"/>
<dbReference type="Proteomes" id="UP000000532">
    <property type="component" value="Chromosome"/>
</dbReference>
<dbReference type="GO" id="GO:0005829">
    <property type="term" value="C:cytosol"/>
    <property type="evidence" value="ECO:0007669"/>
    <property type="project" value="TreeGrafter"/>
</dbReference>
<dbReference type="GO" id="GO:0005524">
    <property type="term" value="F:ATP binding"/>
    <property type="evidence" value="ECO:0007669"/>
    <property type="project" value="UniProtKB-UniRule"/>
</dbReference>
<dbReference type="GO" id="GO:0004818">
    <property type="term" value="F:glutamate-tRNA ligase activity"/>
    <property type="evidence" value="ECO:0007669"/>
    <property type="project" value="UniProtKB-UniRule"/>
</dbReference>
<dbReference type="GO" id="GO:0000049">
    <property type="term" value="F:tRNA binding"/>
    <property type="evidence" value="ECO:0007669"/>
    <property type="project" value="InterPro"/>
</dbReference>
<dbReference type="GO" id="GO:0008270">
    <property type="term" value="F:zinc ion binding"/>
    <property type="evidence" value="ECO:0007669"/>
    <property type="project" value="InterPro"/>
</dbReference>
<dbReference type="GO" id="GO:0006424">
    <property type="term" value="P:glutamyl-tRNA aminoacylation"/>
    <property type="evidence" value="ECO:0007669"/>
    <property type="project" value="UniProtKB-UniRule"/>
</dbReference>
<dbReference type="CDD" id="cd00808">
    <property type="entry name" value="GluRS_core"/>
    <property type="match status" value="1"/>
</dbReference>
<dbReference type="FunFam" id="3.40.50.620:FF:000045">
    <property type="entry name" value="Glutamate--tRNA ligase, mitochondrial"/>
    <property type="match status" value="1"/>
</dbReference>
<dbReference type="Gene3D" id="1.10.10.350">
    <property type="match status" value="1"/>
</dbReference>
<dbReference type="Gene3D" id="1.10.8.70">
    <property type="entry name" value="Glutamate-tRNA synthetase, class I, anticodon-binding domain 1"/>
    <property type="match status" value="1"/>
</dbReference>
<dbReference type="Gene3D" id="3.40.50.620">
    <property type="entry name" value="HUPs"/>
    <property type="match status" value="1"/>
</dbReference>
<dbReference type="HAMAP" id="MF_00022">
    <property type="entry name" value="Glu_tRNA_synth_type1"/>
    <property type="match status" value="1"/>
</dbReference>
<dbReference type="InterPro" id="IPR045462">
    <property type="entry name" value="aa-tRNA-synth_I_cd-bd"/>
</dbReference>
<dbReference type="InterPro" id="IPR020751">
    <property type="entry name" value="aa-tRNA-synth_I_codon-bd_sub2"/>
</dbReference>
<dbReference type="InterPro" id="IPR001412">
    <property type="entry name" value="aa-tRNA-synth_I_CS"/>
</dbReference>
<dbReference type="InterPro" id="IPR008925">
    <property type="entry name" value="aa_tRNA-synth_I_cd-bd_sf"/>
</dbReference>
<dbReference type="InterPro" id="IPR004527">
    <property type="entry name" value="Glu-tRNA-ligase_bac/mito"/>
</dbReference>
<dbReference type="InterPro" id="IPR020752">
    <property type="entry name" value="Glu-tRNA-synth_I_codon-bd_sub1"/>
</dbReference>
<dbReference type="InterPro" id="IPR000924">
    <property type="entry name" value="Glu/Gln-tRNA-synth"/>
</dbReference>
<dbReference type="InterPro" id="IPR020058">
    <property type="entry name" value="Glu/Gln-tRNA-synth_Ib_cat-dom"/>
</dbReference>
<dbReference type="InterPro" id="IPR049940">
    <property type="entry name" value="GluQ/Sye"/>
</dbReference>
<dbReference type="InterPro" id="IPR033910">
    <property type="entry name" value="GluRS_core"/>
</dbReference>
<dbReference type="InterPro" id="IPR014729">
    <property type="entry name" value="Rossmann-like_a/b/a_fold"/>
</dbReference>
<dbReference type="NCBIfam" id="TIGR00464">
    <property type="entry name" value="gltX_bact"/>
    <property type="match status" value="1"/>
</dbReference>
<dbReference type="PANTHER" id="PTHR43311">
    <property type="entry name" value="GLUTAMATE--TRNA LIGASE"/>
    <property type="match status" value="1"/>
</dbReference>
<dbReference type="PANTHER" id="PTHR43311:SF2">
    <property type="entry name" value="GLUTAMATE--TRNA LIGASE, MITOCHONDRIAL-RELATED"/>
    <property type="match status" value="1"/>
</dbReference>
<dbReference type="Pfam" id="PF19269">
    <property type="entry name" value="Anticodon_2"/>
    <property type="match status" value="1"/>
</dbReference>
<dbReference type="Pfam" id="PF00749">
    <property type="entry name" value="tRNA-synt_1c"/>
    <property type="match status" value="1"/>
</dbReference>
<dbReference type="PRINTS" id="PR00987">
    <property type="entry name" value="TRNASYNTHGLU"/>
</dbReference>
<dbReference type="SUPFAM" id="SSF48163">
    <property type="entry name" value="An anticodon-binding domain of class I aminoacyl-tRNA synthetases"/>
    <property type="match status" value="1"/>
</dbReference>
<dbReference type="SUPFAM" id="SSF52374">
    <property type="entry name" value="Nucleotidylyl transferase"/>
    <property type="match status" value="1"/>
</dbReference>
<dbReference type="PROSITE" id="PS00178">
    <property type="entry name" value="AA_TRNA_LIGASE_I"/>
    <property type="match status" value="1"/>
</dbReference>
<comment type="function">
    <text evidence="1 2 3">Catalyzes the attachment of glutamate to tRNA(Glu) in a two-step reaction: glutamate is first activated by ATP to form Glu-AMP and then transferred to the acceptor end of tRNA(Glu).</text>
</comment>
<comment type="catalytic activity">
    <reaction evidence="1">
        <text>tRNA(Glu) + L-glutamate + ATP = L-glutamyl-tRNA(Glu) + AMP + diphosphate</text>
        <dbReference type="Rhea" id="RHEA:23540"/>
        <dbReference type="Rhea" id="RHEA-COMP:9663"/>
        <dbReference type="Rhea" id="RHEA-COMP:9680"/>
        <dbReference type="ChEBI" id="CHEBI:29985"/>
        <dbReference type="ChEBI" id="CHEBI:30616"/>
        <dbReference type="ChEBI" id="CHEBI:33019"/>
        <dbReference type="ChEBI" id="CHEBI:78442"/>
        <dbReference type="ChEBI" id="CHEBI:78520"/>
        <dbReference type="ChEBI" id="CHEBI:456215"/>
        <dbReference type="EC" id="6.1.1.17"/>
    </reaction>
</comment>
<comment type="activity regulation">
    <text evidence="3">In the absence of bound tRNA, ATP is bound in a non-productive mode, and the enzyme cannot activate amino acids.</text>
</comment>
<comment type="biophysicochemical properties">
    <kinetics>
        <KM evidence="2">4.7 uM for tRNA-Glu</KM>
    </kinetics>
</comment>
<comment type="subunit">
    <text evidence="1 2">Monomer.</text>
</comment>
<comment type="subcellular location">
    <subcellularLocation>
        <location evidence="1">Cytoplasm</location>
    </subcellularLocation>
</comment>
<comment type="similarity">
    <text evidence="1">Belongs to the class-I aminoacyl-tRNA synthetase family. Glutamate--tRNA ligase type 1 subfamily.</text>
</comment>
<feature type="chain" id="PRO_0000119683" description="Glutamate--tRNA ligase">
    <location>
        <begin position="1"/>
        <end position="468"/>
    </location>
</feature>
<feature type="region of interest" description="Interaction with tRNA">
    <location>
        <begin position="432"/>
        <end position="447"/>
    </location>
</feature>
<feature type="short sequence motif" description="'HIGH' region" evidence="1">
    <location>
        <begin position="8"/>
        <end position="18"/>
    </location>
</feature>
<feature type="short sequence motif" description="'KMSKS' region" evidence="1">
    <location>
        <begin position="243"/>
        <end position="247"/>
    </location>
</feature>
<feature type="binding site">
    <location>
        <begin position="5"/>
        <end position="7"/>
    </location>
    <ligand>
        <name>L-glutamate</name>
        <dbReference type="ChEBI" id="CHEBI:29985"/>
    </ligand>
</feature>
<feature type="binding site">
    <location>
        <position position="15"/>
    </location>
    <ligand>
        <name>ATP</name>
        <dbReference type="ChEBI" id="CHEBI:30616"/>
    </ligand>
</feature>
<feature type="binding site">
    <location>
        <position position="41"/>
    </location>
    <ligand>
        <name>L-glutamate</name>
        <dbReference type="ChEBI" id="CHEBI:29985"/>
    </ligand>
</feature>
<feature type="binding site">
    <location>
        <begin position="187"/>
        <end position="191"/>
    </location>
    <ligand>
        <name>L-glutamate</name>
        <dbReference type="ChEBI" id="CHEBI:29985"/>
    </ligand>
</feature>
<feature type="binding site">
    <location>
        <position position="205"/>
    </location>
    <ligand>
        <name>L-glutamate</name>
        <dbReference type="ChEBI" id="CHEBI:29985"/>
    </ligand>
</feature>
<feature type="binding site">
    <location>
        <position position="208"/>
    </location>
    <ligand>
        <name>ATP</name>
        <dbReference type="ChEBI" id="CHEBI:30616"/>
    </ligand>
</feature>
<feature type="binding site">
    <location>
        <position position="236"/>
    </location>
    <ligand>
        <name>ATP</name>
        <dbReference type="ChEBI" id="CHEBI:30616"/>
    </ligand>
</feature>
<feature type="binding site">
    <location>
        <begin position="243"/>
        <end position="247"/>
    </location>
    <ligand>
        <name>ATP</name>
        <dbReference type="ChEBI" id="CHEBI:30616"/>
    </ligand>
</feature>
<feature type="binding site" evidence="1">
    <location>
        <position position="246"/>
    </location>
    <ligand>
        <name>ATP</name>
        <dbReference type="ChEBI" id="CHEBI:30616"/>
    </ligand>
</feature>
<feature type="site" description="Interaction with tRNA; via carbonyl oxygen">
    <location>
        <position position="354"/>
    </location>
</feature>
<feature type="site" description="Essential for discrimination between tRNA(Glu) and tRNA(Gln)">
    <location>
        <position position="358"/>
    </location>
</feature>
<feature type="mutagenesis site" description="Reduces affinity for tRNA and abolishes the ability to discriminate between tRNA(Glu) and tRNA(Gln)." evidence="2">
    <original>R</original>
    <variation>Q</variation>
    <location>
        <position position="358"/>
    </location>
</feature>
<feature type="sequence conflict" description="In Ref. 1; CAA45854." evidence="4" ref="1">
    <original>GGPH</original>
    <variation>AAPT</variation>
    <location>
        <begin position="74"/>
        <end position="77"/>
    </location>
</feature>
<feature type="strand" evidence="6">
    <location>
        <begin position="3"/>
        <end position="6"/>
    </location>
</feature>
<feature type="strand" evidence="6">
    <location>
        <begin position="11"/>
        <end position="13"/>
    </location>
</feature>
<feature type="helix" evidence="6">
    <location>
        <begin position="16"/>
        <end position="31"/>
    </location>
</feature>
<feature type="strand" evidence="6">
    <location>
        <begin position="35"/>
        <end position="38"/>
    </location>
</feature>
<feature type="turn" evidence="7">
    <location>
        <begin position="45"/>
        <end position="47"/>
    </location>
</feature>
<feature type="helix" evidence="6">
    <location>
        <begin position="52"/>
        <end position="62"/>
    </location>
</feature>
<feature type="strand" evidence="6">
    <location>
        <begin position="68"/>
        <end position="70"/>
    </location>
</feature>
<feature type="turn" evidence="6">
    <location>
        <begin position="71"/>
        <end position="73"/>
    </location>
</feature>
<feature type="strand" evidence="5">
    <location>
        <begin position="76"/>
        <end position="78"/>
    </location>
</feature>
<feature type="helix" evidence="6">
    <location>
        <begin position="82"/>
        <end position="84"/>
    </location>
</feature>
<feature type="helix" evidence="6">
    <location>
        <begin position="86"/>
        <end position="98"/>
    </location>
</feature>
<feature type="strand" evidence="6">
    <location>
        <begin position="101"/>
        <end position="105"/>
    </location>
</feature>
<feature type="helix" evidence="6">
    <location>
        <begin position="109"/>
        <end position="119"/>
    </location>
</feature>
<feature type="helix" evidence="6">
    <location>
        <begin position="125"/>
        <end position="128"/>
    </location>
</feature>
<feature type="helix" evidence="6">
    <location>
        <begin position="131"/>
        <end position="139"/>
    </location>
</feature>
<feature type="strand" evidence="6">
    <location>
        <begin position="145"/>
        <end position="148"/>
    </location>
</feature>
<feature type="strand" evidence="6">
    <location>
        <begin position="155"/>
        <end position="160"/>
    </location>
</feature>
<feature type="turn" evidence="6">
    <location>
        <begin position="161"/>
        <end position="163"/>
    </location>
</feature>
<feature type="strand" evidence="6">
    <location>
        <begin position="164"/>
        <end position="169"/>
    </location>
</feature>
<feature type="helix" evidence="6">
    <location>
        <begin position="170"/>
        <end position="172"/>
    </location>
</feature>
<feature type="strand" evidence="6">
    <location>
        <begin position="177"/>
        <end position="179"/>
    </location>
</feature>
<feature type="helix" evidence="6">
    <location>
        <begin position="187"/>
        <end position="197"/>
    </location>
</feature>
<feature type="strand" evidence="6">
    <location>
        <begin position="202"/>
        <end position="206"/>
    </location>
</feature>
<feature type="helix" evidence="6">
    <location>
        <begin position="207"/>
        <end position="212"/>
    </location>
</feature>
<feature type="helix" evidence="6">
    <location>
        <begin position="213"/>
        <end position="223"/>
    </location>
</feature>
<feature type="strand" evidence="6">
    <location>
        <begin position="229"/>
        <end position="233"/>
    </location>
</feature>
<feature type="strand" evidence="8">
    <location>
        <begin position="241"/>
        <end position="243"/>
    </location>
</feature>
<feature type="turn" evidence="6">
    <location>
        <begin position="246"/>
        <end position="248"/>
    </location>
</feature>
<feature type="helix" evidence="6">
    <location>
        <begin position="253"/>
        <end position="258"/>
    </location>
</feature>
<feature type="helix" evidence="6">
    <location>
        <begin position="263"/>
        <end position="273"/>
    </location>
</feature>
<feature type="helix" evidence="6">
    <location>
        <begin position="286"/>
        <end position="292"/>
    </location>
</feature>
<feature type="helix" evidence="6">
    <location>
        <begin position="295"/>
        <end position="297"/>
    </location>
</feature>
<feature type="helix" evidence="6">
    <location>
        <begin position="307"/>
        <end position="320"/>
    </location>
</feature>
<feature type="helix" evidence="6">
    <location>
        <begin position="324"/>
        <end position="337"/>
    </location>
</feature>
<feature type="helix" evidence="6">
    <location>
        <begin position="345"/>
        <end position="355"/>
    </location>
</feature>
<feature type="helix" evidence="6">
    <location>
        <begin position="356"/>
        <end position="358"/>
    </location>
</feature>
<feature type="helix" evidence="6">
    <location>
        <begin position="364"/>
        <end position="368"/>
    </location>
</feature>
<feature type="helix" evidence="6">
    <location>
        <begin position="370"/>
        <end position="372"/>
    </location>
</feature>
<feature type="helix" evidence="6">
    <location>
        <begin position="381"/>
        <end position="403"/>
    </location>
</feature>
<feature type="helix" evidence="6">
    <location>
        <begin position="409"/>
        <end position="423"/>
    </location>
</feature>
<feature type="helix" evidence="6">
    <location>
        <begin position="427"/>
        <end position="439"/>
    </location>
</feature>
<feature type="helix" evidence="6">
    <location>
        <begin position="447"/>
        <end position="453"/>
    </location>
</feature>
<feature type="helix" evidence="6">
    <location>
        <begin position="456"/>
        <end position="467"/>
    </location>
</feature>
<organism>
    <name type="scientific">Thermus thermophilus (strain ATCC 27634 / DSM 579 / HB8)</name>
    <dbReference type="NCBI Taxonomy" id="300852"/>
    <lineage>
        <taxon>Bacteria</taxon>
        <taxon>Thermotogati</taxon>
        <taxon>Deinococcota</taxon>
        <taxon>Deinococci</taxon>
        <taxon>Thermales</taxon>
        <taxon>Thermaceae</taxon>
        <taxon>Thermus</taxon>
    </lineage>
</organism>
<evidence type="ECO:0000255" key="1">
    <source>
        <dbReference type="HAMAP-Rule" id="MF_00022"/>
    </source>
</evidence>
<evidence type="ECO:0000269" key="2">
    <source>
    </source>
</evidence>
<evidence type="ECO:0000269" key="3">
    <source>
    </source>
</evidence>
<evidence type="ECO:0000305" key="4"/>
<evidence type="ECO:0007829" key="5">
    <source>
        <dbReference type="PDB" id="1G59"/>
    </source>
</evidence>
<evidence type="ECO:0007829" key="6">
    <source>
        <dbReference type="PDB" id="1J09"/>
    </source>
</evidence>
<evidence type="ECO:0007829" key="7">
    <source>
        <dbReference type="PDB" id="1N75"/>
    </source>
</evidence>
<evidence type="ECO:0007829" key="8">
    <source>
        <dbReference type="PDB" id="2CUZ"/>
    </source>
</evidence>
<sequence>MVVTRIAPSPTGDPHVGTAYIALFNYAWARRNGGRFIVRIEDTDRARYVPGAEERILAALKWLGLSYDEGPDVGGPHGPYRQSERLPLYQKYAEELLKRGWAYRAFETPEELEQIRKEKGGYDGRARNIPPEEAEERARRGEPHVIRLKVPRPGTTEVKDELRGVVVYDNQEIPDVVLLKSDGYPTYHLANVVDDHLMGVTDVIRAEEWLVSTPIHVLLYRAFGWEAPRFYHMPLLRNPDKTKISKRKSHTSLDWYKAEGFLPEALRNYLCLMGFSMPDGREIFTLEEFIQAFTWERVSLGGPVFDLEKLRWMNGKYIREVLSLEEVAERVKPFLREAGLSWESEAYLRRAVELMRPRFDTLKEFPEKARYLFTEDYPVSEKAQRKLEEGLPLLKELYPRLRAQEEWTEAALEALLRGFAAEKGVKLGQVAQPLRAALTGSLETPGLFEILALLGKERALRRLERALA</sequence>
<name>SYE_THET8</name>